<gene>
    <name type="primary">bztA</name>
    <name type="ordered locus">RCAP_rcc00335</name>
</gene>
<feature type="signal peptide" evidence="1">
    <location>
        <begin position="1"/>
        <end position="22"/>
    </location>
</feature>
<feature type="chain" id="PRO_0000031754" description="Glutamate/glutamine/aspartate/asparagine-binding protein BztA">
    <location>
        <begin position="23"/>
        <end position="338"/>
    </location>
</feature>
<feature type="sequence conflict" description="In Ref. 1; AAB17886." evidence="2" ref="1">
    <original>A</original>
    <variation>V</variation>
    <location>
        <position position="5"/>
    </location>
</feature>
<dbReference type="EMBL" id="U37407">
    <property type="protein sequence ID" value="AAB17886.1"/>
    <property type="molecule type" value="Genomic_DNA"/>
</dbReference>
<dbReference type="EMBL" id="CP001312">
    <property type="protein sequence ID" value="ADE84100.1"/>
    <property type="molecule type" value="Genomic_DNA"/>
</dbReference>
<dbReference type="PIR" id="S77605">
    <property type="entry name" value="S77605"/>
</dbReference>
<dbReference type="RefSeq" id="WP_013066080.1">
    <property type="nucleotide sequence ID" value="NC_014034.1"/>
</dbReference>
<dbReference type="SMR" id="Q52663"/>
<dbReference type="STRING" id="272942.RCAP_rcc00335"/>
<dbReference type="TCDB" id="3.A.1.3.7">
    <property type="family name" value="the atp-binding cassette (abc) superfamily"/>
</dbReference>
<dbReference type="GeneID" id="31489292"/>
<dbReference type="KEGG" id="rcp:RCAP_rcc00335"/>
<dbReference type="eggNOG" id="COG0834">
    <property type="taxonomic scope" value="Bacteria"/>
</dbReference>
<dbReference type="HOGENOM" id="CLU_019602_3_2_5"/>
<dbReference type="OrthoDB" id="9777941at2"/>
<dbReference type="Proteomes" id="UP000002361">
    <property type="component" value="Chromosome"/>
</dbReference>
<dbReference type="GO" id="GO:0030288">
    <property type="term" value="C:outer membrane-bounded periplasmic space"/>
    <property type="evidence" value="ECO:0007669"/>
    <property type="project" value="InterPro"/>
</dbReference>
<dbReference type="GO" id="GO:0006865">
    <property type="term" value="P:amino acid transport"/>
    <property type="evidence" value="ECO:0007669"/>
    <property type="project" value="UniProtKB-KW"/>
</dbReference>
<dbReference type="CDD" id="cd13692">
    <property type="entry name" value="PBP2_BztA"/>
    <property type="match status" value="1"/>
</dbReference>
<dbReference type="Gene3D" id="3.40.190.10">
    <property type="entry name" value="Periplasmic binding protein-like II"/>
    <property type="match status" value="2"/>
</dbReference>
<dbReference type="InterPro" id="IPR051455">
    <property type="entry name" value="Bact_solute-bind_prot3"/>
</dbReference>
<dbReference type="InterPro" id="IPR005768">
    <property type="entry name" value="Lys_Arg_Orn-bd"/>
</dbReference>
<dbReference type="InterPro" id="IPR001638">
    <property type="entry name" value="Solute-binding_3/MltF_N"/>
</dbReference>
<dbReference type="NCBIfam" id="TIGR01096">
    <property type="entry name" value="3A0103s03R"/>
    <property type="match status" value="1"/>
</dbReference>
<dbReference type="PANTHER" id="PTHR30085">
    <property type="entry name" value="AMINO ACID ABC TRANSPORTER PERMEASE"/>
    <property type="match status" value="1"/>
</dbReference>
<dbReference type="PANTHER" id="PTHR30085:SF7">
    <property type="entry name" value="AMINO-ACID ABC TRANSPORTER-BINDING PROTEIN YHDW-RELATED"/>
    <property type="match status" value="1"/>
</dbReference>
<dbReference type="Pfam" id="PF00497">
    <property type="entry name" value="SBP_bac_3"/>
    <property type="match status" value="1"/>
</dbReference>
<dbReference type="SMART" id="SM00062">
    <property type="entry name" value="PBPb"/>
    <property type="match status" value="1"/>
</dbReference>
<dbReference type="SUPFAM" id="SSF53850">
    <property type="entry name" value="Periplasmic binding protein-like II"/>
    <property type="match status" value="1"/>
</dbReference>
<proteinExistence type="inferred from homology"/>
<comment type="function">
    <text>Part of a binding-protein-dependent transport system for glutamate, glutamine, aspartate and asparagine.</text>
</comment>
<comment type="subcellular location">
    <subcellularLocation>
        <location evidence="2">Periplasm</location>
    </subcellularLocation>
</comment>
<comment type="similarity">
    <text evidence="2">Belongs to the bacterial solute-binding protein 3 family.</text>
</comment>
<keyword id="KW-0029">Amino-acid transport</keyword>
<keyword id="KW-0574">Periplasm</keyword>
<keyword id="KW-1185">Reference proteome</keyword>
<keyword id="KW-0732">Signal</keyword>
<keyword id="KW-0813">Transport</keyword>
<evidence type="ECO:0000255" key="1"/>
<evidence type="ECO:0000305" key="2"/>
<accession>Q52663</accession>
<accession>D5AM30</accession>
<reference key="1">
    <citation type="journal article" date="1996" name="Mol. Microbiol.">
        <title>A glutamate/glutamine/aspartate/asparagine transport operon in Rhodobacter capsulatus.</title>
        <authorList>
            <person name="Zheng S."/>
            <person name="Haselkorn R."/>
        </authorList>
    </citation>
    <scope>NUCLEOTIDE SEQUENCE [GENOMIC DNA]</scope>
    <source>
        <strain>ATCC BAA-309 / NBRC 16581 / SB1003</strain>
    </source>
</reference>
<reference key="2">
    <citation type="journal article" date="2010" name="J. Bacteriol.">
        <title>Complete genome sequence of the photosynthetic purple nonsulfur bacterium Rhodobacter capsulatus SB 1003.</title>
        <authorList>
            <person name="Strnad H."/>
            <person name="Lapidus A."/>
            <person name="Paces J."/>
            <person name="Ulbrich P."/>
            <person name="Vlcek C."/>
            <person name="Paces V."/>
            <person name="Haselkorn R."/>
        </authorList>
    </citation>
    <scope>NUCLEOTIDE SEQUENCE [LARGE SCALE GENOMIC DNA]</scope>
    <source>
        <strain>ATCC BAA-309 / NBRC 16581 / SB1003</strain>
    </source>
</reference>
<name>BZTA_RHOCB</name>
<sequence length="338" mass="35528">MKKSAFFGSVALAALVAGAASASTLDDVKARGQLICGSNPGLTGFAAPDANGVYQGFDVAVCKAVAAAVLGDPMKVKYVPLTGETRFTALASGEVDVLVRNSTWTFSRDTELALDFVAVNYYDGQGFMVNKSLGVSSAKELDGATICVQTGTTTEMNLADFFKANNMTYTPVNIADDAEGQQKFAAGACDSYTTDASGLASSRATLPNAADIVILPEIISKEPLGPVVRHGDNNWGDIVRWSFYALVAAEEYGITKANLEEVAASTQNPEIRRLLGLEGDMGKKIGLDNDFAKRAILASGNYGEVFEANIGASTSIGLARGLNAQWTQGGLMYAPPFR</sequence>
<protein>
    <recommendedName>
        <fullName>Glutamate/glutamine/aspartate/asparagine-binding protein BztA</fullName>
    </recommendedName>
</protein>
<organism>
    <name type="scientific">Rhodobacter capsulatus (strain ATCC BAA-309 / NBRC 16581 / SB1003)</name>
    <dbReference type="NCBI Taxonomy" id="272942"/>
    <lineage>
        <taxon>Bacteria</taxon>
        <taxon>Pseudomonadati</taxon>
        <taxon>Pseudomonadota</taxon>
        <taxon>Alphaproteobacteria</taxon>
        <taxon>Rhodobacterales</taxon>
        <taxon>Rhodobacter group</taxon>
        <taxon>Rhodobacter</taxon>
    </lineage>
</organism>